<dbReference type="EMBL" id="AM286415">
    <property type="protein sequence ID" value="CAL10540.1"/>
    <property type="molecule type" value="Genomic_DNA"/>
</dbReference>
<dbReference type="RefSeq" id="WP_004389210.1">
    <property type="nucleotide sequence ID" value="NC_008800.1"/>
</dbReference>
<dbReference type="RefSeq" id="YP_001004785.1">
    <property type="nucleotide sequence ID" value="NC_008800.1"/>
</dbReference>
<dbReference type="SMR" id="A1JIU9"/>
<dbReference type="GeneID" id="82549662"/>
<dbReference type="KEGG" id="yen:YE0413"/>
<dbReference type="PATRIC" id="fig|393305.7.peg.509"/>
<dbReference type="eggNOG" id="COG1438">
    <property type="taxonomic scope" value="Bacteria"/>
</dbReference>
<dbReference type="HOGENOM" id="CLU_097103_2_0_6"/>
<dbReference type="OrthoDB" id="7060358at2"/>
<dbReference type="UniPathway" id="UPA00068"/>
<dbReference type="Proteomes" id="UP000000642">
    <property type="component" value="Chromosome"/>
</dbReference>
<dbReference type="GO" id="GO:0005737">
    <property type="term" value="C:cytoplasm"/>
    <property type="evidence" value="ECO:0007669"/>
    <property type="project" value="UniProtKB-SubCell"/>
</dbReference>
<dbReference type="GO" id="GO:0034618">
    <property type="term" value="F:arginine binding"/>
    <property type="evidence" value="ECO:0007669"/>
    <property type="project" value="InterPro"/>
</dbReference>
<dbReference type="GO" id="GO:0003677">
    <property type="term" value="F:DNA binding"/>
    <property type="evidence" value="ECO:0007669"/>
    <property type="project" value="UniProtKB-KW"/>
</dbReference>
<dbReference type="GO" id="GO:0003700">
    <property type="term" value="F:DNA-binding transcription factor activity"/>
    <property type="evidence" value="ECO:0007669"/>
    <property type="project" value="UniProtKB-UniRule"/>
</dbReference>
<dbReference type="GO" id="GO:0006526">
    <property type="term" value="P:L-arginine biosynthetic process"/>
    <property type="evidence" value="ECO:0007669"/>
    <property type="project" value="UniProtKB-UniPathway"/>
</dbReference>
<dbReference type="GO" id="GO:0051259">
    <property type="term" value="P:protein complex oligomerization"/>
    <property type="evidence" value="ECO:0007669"/>
    <property type="project" value="InterPro"/>
</dbReference>
<dbReference type="GO" id="GO:1900079">
    <property type="term" value="P:regulation of arginine biosynthetic process"/>
    <property type="evidence" value="ECO:0007669"/>
    <property type="project" value="UniProtKB-UniRule"/>
</dbReference>
<dbReference type="FunFam" id="1.10.10.10:FF:000074">
    <property type="entry name" value="Arginine repressor"/>
    <property type="match status" value="1"/>
</dbReference>
<dbReference type="FunFam" id="3.30.1360.40:FF:000004">
    <property type="entry name" value="Arginine repressor"/>
    <property type="match status" value="1"/>
</dbReference>
<dbReference type="Gene3D" id="3.30.1360.40">
    <property type="match status" value="1"/>
</dbReference>
<dbReference type="Gene3D" id="1.10.10.10">
    <property type="entry name" value="Winged helix-like DNA-binding domain superfamily/Winged helix DNA-binding domain"/>
    <property type="match status" value="1"/>
</dbReference>
<dbReference type="HAMAP" id="MF_00173">
    <property type="entry name" value="Arg_repressor"/>
    <property type="match status" value="1"/>
</dbReference>
<dbReference type="InterPro" id="IPR001669">
    <property type="entry name" value="Arg_repress"/>
</dbReference>
<dbReference type="InterPro" id="IPR020899">
    <property type="entry name" value="Arg_repress_C"/>
</dbReference>
<dbReference type="InterPro" id="IPR036251">
    <property type="entry name" value="Arg_repress_C_sf"/>
</dbReference>
<dbReference type="InterPro" id="IPR020900">
    <property type="entry name" value="Arg_repress_DNA-bd"/>
</dbReference>
<dbReference type="InterPro" id="IPR036388">
    <property type="entry name" value="WH-like_DNA-bd_sf"/>
</dbReference>
<dbReference type="InterPro" id="IPR036390">
    <property type="entry name" value="WH_DNA-bd_sf"/>
</dbReference>
<dbReference type="NCBIfam" id="TIGR01529">
    <property type="entry name" value="argR_whole"/>
    <property type="match status" value="1"/>
</dbReference>
<dbReference type="NCBIfam" id="NF003457">
    <property type="entry name" value="PRK05066.1"/>
    <property type="match status" value="1"/>
</dbReference>
<dbReference type="PANTHER" id="PTHR34471">
    <property type="entry name" value="ARGININE REPRESSOR"/>
    <property type="match status" value="1"/>
</dbReference>
<dbReference type="PANTHER" id="PTHR34471:SF1">
    <property type="entry name" value="ARGININE REPRESSOR"/>
    <property type="match status" value="1"/>
</dbReference>
<dbReference type="Pfam" id="PF01316">
    <property type="entry name" value="Arg_repressor"/>
    <property type="match status" value="1"/>
</dbReference>
<dbReference type="Pfam" id="PF02863">
    <property type="entry name" value="Arg_repressor_C"/>
    <property type="match status" value="1"/>
</dbReference>
<dbReference type="PRINTS" id="PR01467">
    <property type="entry name" value="ARGREPRESSOR"/>
</dbReference>
<dbReference type="SUPFAM" id="SSF55252">
    <property type="entry name" value="C-terminal domain of arginine repressor"/>
    <property type="match status" value="1"/>
</dbReference>
<dbReference type="SUPFAM" id="SSF46785">
    <property type="entry name" value="Winged helix' DNA-binding domain"/>
    <property type="match status" value="1"/>
</dbReference>
<name>ARGR_YERE8</name>
<comment type="function">
    <text evidence="1">Regulates arginine biosynthesis genes.</text>
</comment>
<comment type="pathway">
    <text>Amino-acid biosynthesis; L-arginine biosynthesis [regulation].</text>
</comment>
<comment type="subcellular location">
    <subcellularLocation>
        <location evidence="1">Cytoplasm</location>
    </subcellularLocation>
</comment>
<comment type="similarity">
    <text evidence="1">Belongs to the ArgR family.</text>
</comment>
<keyword id="KW-0028">Amino-acid biosynthesis</keyword>
<keyword id="KW-0055">Arginine biosynthesis</keyword>
<keyword id="KW-0963">Cytoplasm</keyword>
<keyword id="KW-0238">DNA-binding</keyword>
<keyword id="KW-0678">Repressor</keyword>
<keyword id="KW-0804">Transcription</keyword>
<keyword id="KW-0805">Transcription regulation</keyword>
<protein>
    <recommendedName>
        <fullName evidence="1">Arginine repressor</fullName>
    </recommendedName>
</protein>
<feature type="chain" id="PRO_1000023614" description="Arginine repressor">
    <location>
        <begin position="1"/>
        <end position="156"/>
    </location>
</feature>
<sequence length="156" mass="17125">MRNPAKQEDLIKAFKALLKEEKFSSQGEIVLALQEEGFENINQSKVSRMLTKFGAVRTRNAKMEMVYCLPAELGVPTTSSPLKNLVLDVDYNDSVVVINTSPGAAQLIARLLDSLGKAEGILGSIAGDDTIFTTPARGFTVEQLHEAILRLFEQEL</sequence>
<proteinExistence type="inferred from homology"/>
<evidence type="ECO:0000255" key="1">
    <source>
        <dbReference type="HAMAP-Rule" id="MF_00173"/>
    </source>
</evidence>
<gene>
    <name evidence="1" type="primary">argR</name>
    <name type="ordered locus">YE0413</name>
</gene>
<reference key="1">
    <citation type="journal article" date="2006" name="PLoS Genet.">
        <title>The complete genome sequence and comparative genome analysis of the high pathogenicity Yersinia enterocolitica strain 8081.</title>
        <authorList>
            <person name="Thomson N.R."/>
            <person name="Howard S."/>
            <person name="Wren B.W."/>
            <person name="Holden M.T.G."/>
            <person name="Crossman L."/>
            <person name="Challis G.L."/>
            <person name="Churcher C."/>
            <person name="Mungall K."/>
            <person name="Brooks K."/>
            <person name="Chillingworth T."/>
            <person name="Feltwell T."/>
            <person name="Abdellah Z."/>
            <person name="Hauser H."/>
            <person name="Jagels K."/>
            <person name="Maddison M."/>
            <person name="Moule S."/>
            <person name="Sanders M."/>
            <person name="Whitehead S."/>
            <person name="Quail M.A."/>
            <person name="Dougan G."/>
            <person name="Parkhill J."/>
            <person name="Prentice M.B."/>
        </authorList>
    </citation>
    <scope>NUCLEOTIDE SEQUENCE [LARGE SCALE GENOMIC DNA]</scope>
    <source>
        <strain>NCTC 13174 / 8081</strain>
    </source>
</reference>
<accession>A1JIU9</accession>
<organism>
    <name type="scientific">Yersinia enterocolitica serotype O:8 / biotype 1B (strain NCTC 13174 / 8081)</name>
    <dbReference type="NCBI Taxonomy" id="393305"/>
    <lineage>
        <taxon>Bacteria</taxon>
        <taxon>Pseudomonadati</taxon>
        <taxon>Pseudomonadota</taxon>
        <taxon>Gammaproteobacteria</taxon>
        <taxon>Enterobacterales</taxon>
        <taxon>Yersiniaceae</taxon>
        <taxon>Yersinia</taxon>
    </lineage>
</organism>